<comment type="subunit">
    <text evidence="1">Part of the 50S ribosomal subunit.</text>
</comment>
<comment type="subcellular location">
    <subcellularLocation>
        <location>Plastid</location>
        <location>Chloroplast</location>
    </subcellularLocation>
</comment>
<comment type="similarity">
    <text evidence="1">Belongs to the universal ribosomal protein uL16 family.</text>
</comment>
<accession>Q68RW9</accession>
<feature type="chain" id="PRO_0000062301" description="Large ribosomal subunit protein uL16c">
    <location>
        <begin position="1"/>
        <end position="135"/>
    </location>
</feature>
<protein>
    <recommendedName>
        <fullName evidence="1">Large ribosomal subunit protein uL16c</fullName>
    </recommendedName>
    <alternativeName>
        <fullName evidence="2">50S ribosomal protein L16, chloroplastic</fullName>
    </alternativeName>
</protein>
<proteinExistence type="inferred from homology"/>
<dbReference type="EMBL" id="AY582139">
    <property type="protein sequence ID" value="AAT98546.1"/>
    <property type="molecule type" value="Genomic_DNA"/>
</dbReference>
<dbReference type="RefSeq" id="YP_087003.1">
    <property type="nucleotide sequence ID" value="NC_006290.1"/>
</dbReference>
<dbReference type="SMR" id="Q68RW9"/>
<dbReference type="GeneID" id="3021547"/>
<dbReference type="GO" id="GO:0009507">
    <property type="term" value="C:chloroplast"/>
    <property type="evidence" value="ECO:0007669"/>
    <property type="project" value="UniProtKB-SubCell"/>
</dbReference>
<dbReference type="GO" id="GO:0005762">
    <property type="term" value="C:mitochondrial large ribosomal subunit"/>
    <property type="evidence" value="ECO:0007669"/>
    <property type="project" value="TreeGrafter"/>
</dbReference>
<dbReference type="GO" id="GO:0019843">
    <property type="term" value="F:rRNA binding"/>
    <property type="evidence" value="ECO:0007669"/>
    <property type="project" value="InterPro"/>
</dbReference>
<dbReference type="GO" id="GO:0003735">
    <property type="term" value="F:structural constituent of ribosome"/>
    <property type="evidence" value="ECO:0007669"/>
    <property type="project" value="InterPro"/>
</dbReference>
<dbReference type="GO" id="GO:0032543">
    <property type="term" value="P:mitochondrial translation"/>
    <property type="evidence" value="ECO:0007669"/>
    <property type="project" value="TreeGrafter"/>
</dbReference>
<dbReference type="CDD" id="cd01433">
    <property type="entry name" value="Ribosomal_L16_L10e"/>
    <property type="match status" value="1"/>
</dbReference>
<dbReference type="FunFam" id="3.90.1170.10:FF:000001">
    <property type="entry name" value="50S ribosomal protein L16"/>
    <property type="match status" value="1"/>
</dbReference>
<dbReference type="Gene3D" id="3.90.1170.10">
    <property type="entry name" value="Ribosomal protein L10e/L16"/>
    <property type="match status" value="1"/>
</dbReference>
<dbReference type="HAMAP" id="MF_01342">
    <property type="entry name" value="Ribosomal_uL16"/>
    <property type="match status" value="1"/>
</dbReference>
<dbReference type="InterPro" id="IPR047873">
    <property type="entry name" value="Ribosomal_uL16"/>
</dbReference>
<dbReference type="InterPro" id="IPR000114">
    <property type="entry name" value="Ribosomal_uL16_bact-type"/>
</dbReference>
<dbReference type="InterPro" id="IPR020798">
    <property type="entry name" value="Ribosomal_uL16_CS"/>
</dbReference>
<dbReference type="InterPro" id="IPR016180">
    <property type="entry name" value="Ribosomal_uL16_dom"/>
</dbReference>
<dbReference type="InterPro" id="IPR036920">
    <property type="entry name" value="Ribosomal_uL16_sf"/>
</dbReference>
<dbReference type="NCBIfam" id="TIGR01164">
    <property type="entry name" value="rplP_bact"/>
    <property type="match status" value="1"/>
</dbReference>
<dbReference type="PANTHER" id="PTHR12220">
    <property type="entry name" value="50S/60S RIBOSOMAL PROTEIN L16"/>
    <property type="match status" value="1"/>
</dbReference>
<dbReference type="PANTHER" id="PTHR12220:SF13">
    <property type="entry name" value="LARGE RIBOSOMAL SUBUNIT PROTEIN UL16M"/>
    <property type="match status" value="1"/>
</dbReference>
<dbReference type="Pfam" id="PF00252">
    <property type="entry name" value="Ribosomal_L16"/>
    <property type="match status" value="1"/>
</dbReference>
<dbReference type="PRINTS" id="PR00060">
    <property type="entry name" value="RIBOSOMALL16"/>
</dbReference>
<dbReference type="SUPFAM" id="SSF54686">
    <property type="entry name" value="Ribosomal protein L16p/L10e"/>
    <property type="match status" value="1"/>
</dbReference>
<dbReference type="PROSITE" id="PS00586">
    <property type="entry name" value="RIBOSOMAL_L16_1"/>
    <property type="match status" value="1"/>
</dbReference>
<dbReference type="PROSITE" id="PS00701">
    <property type="entry name" value="RIBOSOMAL_L16_2"/>
    <property type="match status" value="1"/>
</dbReference>
<geneLocation type="chloroplast"/>
<evidence type="ECO:0000255" key="1">
    <source>
        <dbReference type="HAMAP-Rule" id="MF_01342"/>
    </source>
</evidence>
<evidence type="ECO:0000305" key="2"/>
<name>RK16_PANGI</name>
<gene>
    <name evidence="1" type="primary">rpl16</name>
    <name type="ORF">PSC0831</name>
</gene>
<keyword id="KW-0150">Chloroplast</keyword>
<keyword id="KW-0934">Plastid</keyword>
<keyword id="KW-0687">Ribonucleoprotein</keyword>
<keyword id="KW-0689">Ribosomal protein</keyword>
<reference key="1">
    <citation type="journal article" date="2004" name="DNA Res.">
        <title>Complete chloroplast genome sequence from Korea ginseng (Panax schinseng Nees) and comparative analysis of sequence evolution among 17 vascular plants.</title>
        <authorList>
            <person name="Kim K.-J."/>
            <person name="Lee H.-L."/>
        </authorList>
    </citation>
    <scope>NUCLEOTIDE SEQUENCE [LARGE SCALE GENOMIC DNA]</scope>
</reference>
<organism>
    <name type="scientific">Panax ginseng</name>
    <name type="common">Korean ginseng</name>
    <dbReference type="NCBI Taxonomy" id="4054"/>
    <lineage>
        <taxon>Eukaryota</taxon>
        <taxon>Viridiplantae</taxon>
        <taxon>Streptophyta</taxon>
        <taxon>Embryophyta</taxon>
        <taxon>Tracheophyta</taxon>
        <taxon>Spermatophyta</taxon>
        <taxon>Magnoliopsida</taxon>
        <taxon>eudicotyledons</taxon>
        <taxon>Gunneridae</taxon>
        <taxon>Pentapetalae</taxon>
        <taxon>asterids</taxon>
        <taxon>campanulids</taxon>
        <taxon>Apiales</taxon>
        <taxon>Araliaceae</taxon>
        <taxon>Panax</taxon>
    </lineage>
</organism>
<sequence>MLSPKRTRFRKQHRGRMKGISYRGNHISFGKYALQALEPAWITSRQIEAGRRAMTRNARRGGKIWVRIFPDKPVTVRPAETRMGSGKGSPEYWVAVVKPGRILYEMGGVTENIARKAISIASSKMPIRTQFIISA</sequence>